<comment type="function">
    <text evidence="7">Variant histone H2A which replaces conventional H2A in a subset of nucleosomes where it represses transcription. Nucleosomes wrap and compact DNA into chromatin, limiting DNA accessibility to the cellular machineries which require DNA as a template. Histones thereby play a central role in transcription regulation, DNA repair, DNA replication and chromosomal stability. DNA accessibility is regulated via a complex set of post-translational modifications of histones, also called histone code, and nucleosome remodeling.</text>
</comment>
<comment type="function">
    <molecule>Isoform 1</molecule>
    <text evidence="4">Isoform that specifically binds poly-ADP-ribose and O-acetyl-ADP-ribose and plays a key role in NAD(+) metabolism. Able to bind to the ends of poly-ADP-ribose chains created by PARP1 and cap them. This prevents PARP1 from further addition of ADP-ribose and thus limits the consumption of nuclear NAD(+), allowing the cell to maintain proper NAD(+) levels in both the nucleus and the mitochondria to promote proper mitochondrial respiration.</text>
</comment>
<comment type="function">
    <molecule>Isoform 2</molecule>
    <text evidence="4">In contrast to isoform 1, does not bind poly-ADP-ribose.</text>
</comment>
<comment type="subunit">
    <text evidence="2">The nucleosome is a histone octamer containing two molecules each of H2A, H2B, H3 and H4 assembled in one H3-H4 heterotetramer and two H2A-H2B heterodimers.</text>
</comment>
<comment type="subcellular location">
    <subcellularLocation>
        <location evidence="2">Nucleus</location>
    </subcellularLocation>
    <subcellularLocation>
        <location evidence="2">Chromosome</location>
    </subcellularLocation>
</comment>
<comment type="alternative products">
    <event type="alternative splicing"/>
    <isoform>
        <id>O93327-2</id>
        <name>1</name>
        <sequence type="displayed"/>
    </isoform>
    <isoform>
        <id>O93327-1</id>
        <name>2</name>
        <sequence type="described" ref="VSP_061613"/>
    </isoform>
</comment>
<comment type="tissue specificity">
    <text evidence="8">Present in liver (at protein level).</text>
</comment>
<comment type="developmental stage">
    <text evidence="8">Present in immature erythrocytes (at protein level).</text>
</comment>
<comment type="domain">
    <molecule>Isoform 1</molecule>
    <text evidence="2">The macro domain specifically binds poly-ADP-ribose.</text>
</comment>
<comment type="PTM">
    <text evidence="10 11">ADP-ribosylated.</text>
</comment>
<comment type="PTM">
    <text evidence="2">Monoubiquitinated at either Lys-116 or Lys-117. May also be polyubiquitinated. Ubiquitination is mediated by the CUL3/SPOP E3 complex and does not promote proteasomal degradation. Instead, it is required for enrichment in inactive X chromosome chromatin.</text>
</comment>
<comment type="similarity">
    <text evidence="10">Belongs to the histone H2A family.</text>
</comment>
<proteinExistence type="evidence at protein level"/>
<gene>
    <name evidence="2" type="primary">MACROH2A1</name>
</gene>
<keyword id="KW-0007">Acetylation</keyword>
<keyword id="KW-0013">ADP-ribosylation</keyword>
<keyword id="KW-0025">Alternative splicing</keyword>
<keyword id="KW-0156">Chromatin regulator</keyword>
<keyword id="KW-0158">Chromosome</keyword>
<keyword id="KW-0238">DNA-binding</keyword>
<keyword id="KW-1017">Isopeptide bond</keyword>
<keyword id="KW-0488">Methylation</keyword>
<keyword id="KW-0544">Nucleosome core</keyword>
<keyword id="KW-0539">Nucleus</keyword>
<keyword id="KW-0597">Phosphoprotein</keyword>
<keyword id="KW-1185">Reference proteome</keyword>
<keyword id="KW-0832">Ubl conjugation</keyword>
<organism>
    <name type="scientific">Gallus gallus</name>
    <name type="common">Chicken</name>
    <dbReference type="NCBI Taxonomy" id="9031"/>
    <lineage>
        <taxon>Eukaryota</taxon>
        <taxon>Metazoa</taxon>
        <taxon>Chordata</taxon>
        <taxon>Craniata</taxon>
        <taxon>Vertebrata</taxon>
        <taxon>Euteleostomi</taxon>
        <taxon>Archelosauria</taxon>
        <taxon>Archosauria</taxon>
        <taxon>Dinosauria</taxon>
        <taxon>Saurischia</taxon>
        <taxon>Theropoda</taxon>
        <taxon>Coelurosauria</taxon>
        <taxon>Aves</taxon>
        <taxon>Neognathae</taxon>
        <taxon>Galloanserae</taxon>
        <taxon>Galliformes</taxon>
        <taxon>Phasianidae</taxon>
        <taxon>Phasianinae</taxon>
        <taxon>Gallus</taxon>
    </lineage>
</organism>
<accession>O93327</accession>
<accession>O93326</accession>
<protein>
    <recommendedName>
        <fullName>Core histone macro-H2A.1</fullName>
        <shortName>Histone macroH2A1</shortName>
        <shortName>mH2A1</shortName>
    </recommendedName>
    <alternativeName>
        <fullName>H2A.y</fullName>
    </alternativeName>
    <alternativeName>
        <fullName>H2A/y</fullName>
    </alternativeName>
</protein>
<reference key="1">
    <citation type="journal article" date="1998" name="Nucleic Acids Res.">
        <title>Evolutionary conservation of histone macroH2A subtypes and domains.</title>
        <authorList>
            <person name="Pehrson J.R."/>
            <person name="Fuji R.N."/>
        </authorList>
    </citation>
    <scope>NUCLEOTIDE SEQUENCE [MRNA] (ISOFORMS 1 AND 2)</scope>
    <scope>TISSUE SPECIFICITY</scope>
    <scope>DEVELOPMENTAL STAGE</scope>
    <source>
        <tissue>Brain</tissue>
    </source>
</reference>
<reference key="2">
    <citation type="journal article" date="2005" name="J. Biol. Chem.">
        <title>Beyond the Xi: macroH2A chromatin distribution and post-translational modification in an avian system.</title>
        <authorList>
            <person name="Abbott D.W."/>
            <person name="Chadwick B.P."/>
            <person name="Thambirajah A.A."/>
            <person name="Ausio J."/>
        </authorList>
    </citation>
    <scope>FUNCTION</scope>
    <scope>ADP-RIBOSYLATION</scope>
</reference>
<sequence>MSSRGGKKKSTKTSRSAKAGVIFPVGRMLRYIKKGHPKYRIGVGAPVYMAAVLEYLTAEILELAGNAARDNKKGRVTPRHILLAVANDEELNQLLKGVTIASGGVLPNIHPELLAKKRGSKGKLEAIITPPPAKKAKSPSQKKTVSKKTGGKKGARKSKKKQGEVSKSASADSTTEGTPADGFTVLSTKSLFLGQKLQVVQADIATIDSDAVVHPTNSDFYTGGEVGSTLEKKGGKEFVEAVIELRKKNGPLDIAGAVVSAGHGLPAKFVIHCNSPGWGSDKCEELLEKTVKNCLALADEKKLKSIAFPSIGSGRNGFPKQTAAQLILKAISSYFVSTMSSSIKTVYFVLFDSESIGIYVQEMAKLDAN</sequence>
<name>H2AY_CHICK</name>
<evidence type="ECO:0000250" key="1">
    <source>
        <dbReference type="UniProtKB" id="A0A0D2UG83"/>
    </source>
</evidence>
<evidence type="ECO:0000250" key="2">
    <source>
        <dbReference type="UniProtKB" id="O75367"/>
    </source>
</evidence>
<evidence type="ECO:0000250" key="3">
    <source>
        <dbReference type="UniProtKB" id="P0C0S5"/>
    </source>
</evidence>
<evidence type="ECO:0000250" key="4">
    <source>
        <dbReference type="UniProtKB" id="Q9QZQ8"/>
    </source>
</evidence>
<evidence type="ECO:0000255" key="5">
    <source>
        <dbReference type="PROSITE-ProRule" id="PRU00490"/>
    </source>
</evidence>
<evidence type="ECO:0000256" key="6">
    <source>
        <dbReference type="SAM" id="MobiDB-lite"/>
    </source>
</evidence>
<evidence type="ECO:0000269" key="7">
    <source>
    </source>
</evidence>
<evidence type="ECO:0000269" key="8">
    <source>
    </source>
</evidence>
<evidence type="ECO:0000303" key="9">
    <source>
    </source>
</evidence>
<evidence type="ECO:0000305" key="10"/>
<evidence type="ECO:0000305" key="11">
    <source>
    </source>
</evidence>
<feature type="chain" id="PRO_0000227905" description="Core histone macro-H2A.1">
    <location>
        <begin position="1"/>
        <end position="369"/>
    </location>
</feature>
<feature type="domain" description="Histone H2A">
    <location>
        <begin position="15"/>
        <end position="90"/>
    </location>
</feature>
<feature type="domain" description="Macro" evidence="5">
    <location>
        <begin position="184"/>
        <end position="367"/>
    </location>
</feature>
<feature type="region of interest" description="Disordered" evidence="6">
    <location>
        <begin position="128"/>
        <end position="180"/>
    </location>
</feature>
<feature type="compositionally biased region" description="Basic residues" evidence="6">
    <location>
        <begin position="144"/>
        <end position="160"/>
    </location>
</feature>
<feature type="compositionally biased region" description="Polar residues" evidence="6">
    <location>
        <begin position="165"/>
        <end position="177"/>
    </location>
</feature>
<feature type="binding site" evidence="1">
    <location>
        <position position="203"/>
    </location>
    <ligand>
        <name>a glycoprotein</name>
        <dbReference type="ChEBI" id="CHEBI:17089"/>
    </ligand>
    <ligandPart>
        <name>poly[(1''-&gt;2')-ADP-alpha-D-ribose] group</name>
        <dbReference type="ChEBI" id="CHEBI:157741"/>
    </ligandPart>
</feature>
<feature type="binding site" evidence="1">
    <location>
        <position position="204"/>
    </location>
    <ligand>
        <name>a glycoprotein</name>
        <dbReference type="ChEBI" id="CHEBI:17089"/>
    </ligand>
    <ligandPart>
        <name>poly[(1''-&gt;2')-ADP-alpha-D-ribose] group</name>
        <dbReference type="ChEBI" id="CHEBI:157741"/>
    </ligandPart>
</feature>
<feature type="binding site" evidence="1">
    <location>
        <position position="226"/>
    </location>
    <ligand>
        <name>a glycoprotein</name>
        <dbReference type="ChEBI" id="CHEBI:17089"/>
    </ligand>
    <ligandPart>
        <name>poly[(1''-&gt;2')-ADP-alpha-D-ribose] group</name>
        <dbReference type="ChEBI" id="CHEBI:157741"/>
    </ligandPart>
</feature>
<feature type="binding site" evidence="1">
    <location>
        <position position="275"/>
    </location>
    <ligand>
        <name>a glycoprotein</name>
        <dbReference type="ChEBI" id="CHEBI:17089"/>
    </ligand>
    <ligandPart>
        <name>poly[(1''-&gt;2')-ADP-alpha-D-ribose] group</name>
        <dbReference type="ChEBI" id="CHEBI:157741"/>
    </ligandPart>
</feature>
<feature type="binding site" evidence="1">
    <location>
        <position position="312"/>
    </location>
    <ligand>
        <name>a glycoprotein</name>
        <dbReference type="ChEBI" id="CHEBI:17089"/>
    </ligand>
    <ligandPart>
        <name>poly[(1''-&gt;2')-ADP-alpha-D-ribose] group</name>
        <dbReference type="ChEBI" id="CHEBI:157741"/>
    </ligandPart>
</feature>
<feature type="binding site" evidence="1">
    <location>
        <position position="313"/>
    </location>
    <ligand>
        <name>a glycoprotein</name>
        <dbReference type="ChEBI" id="CHEBI:17089"/>
    </ligand>
    <ligandPart>
        <name>poly[(1''-&gt;2')-ADP-alpha-D-ribose] group</name>
        <dbReference type="ChEBI" id="CHEBI:157741"/>
    </ligandPart>
</feature>
<feature type="binding site" evidence="1">
    <location>
        <position position="314"/>
    </location>
    <ligand>
        <name>a glycoprotein</name>
        <dbReference type="ChEBI" id="CHEBI:17089"/>
    </ligand>
    <ligandPart>
        <name>poly[(1''-&gt;2')-ADP-alpha-D-ribose] group</name>
        <dbReference type="ChEBI" id="CHEBI:157741"/>
    </ligandPart>
</feature>
<feature type="binding site" evidence="1">
    <location>
        <position position="316"/>
    </location>
    <ligand>
        <name>a glycoprotein</name>
        <dbReference type="ChEBI" id="CHEBI:17089"/>
    </ligand>
    <ligandPart>
        <name>poly[(1''-&gt;2')-ADP-alpha-D-ribose] group</name>
        <dbReference type="ChEBI" id="CHEBI:157741"/>
    </ligandPart>
</feature>
<feature type="modified residue" description="N6-lactoyllysine; alternate" evidence="3">
    <location>
        <position position="7"/>
    </location>
</feature>
<feature type="modified residue" description="N6-lactoyllysine; alternate" evidence="3">
    <location>
        <position position="9"/>
    </location>
</feature>
<feature type="modified residue" description="N6-methyllysine" evidence="2">
    <location>
        <position position="18"/>
    </location>
</feature>
<feature type="modified residue" description="N6-acetyllysine; alternate" evidence="4">
    <location>
        <position position="116"/>
    </location>
</feature>
<feature type="modified residue" description="N6,N6-dimethyllysine; alternate" evidence="2">
    <location>
        <position position="123"/>
    </location>
</feature>
<feature type="modified residue" description="N6-acetyllysine; alternate" evidence="4">
    <location>
        <position position="123"/>
    </location>
</feature>
<feature type="modified residue" description="Phosphothreonine" evidence="2">
    <location>
        <position position="129"/>
    </location>
</feature>
<feature type="modified residue" description="Phosphoserine" evidence="2">
    <location>
        <position position="170"/>
    </location>
</feature>
<feature type="modified residue" description="Phosphoserine" evidence="2">
    <location>
        <position position="173"/>
    </location>
</feature>
<feature type="modified residue" description="Phosphothreonine" evidence="2">
    <location>
        <position position="178"/>
    </location>
</feature>
<feature type="cross-link" description="Glycyl lysine isopeptide (Lys-Gly) (interchain with G-Cter in ubiquitin); alternate" evidence="2">
    <location>
        <position position="116"/>
    </location>
</feature>
<feature type="cross-link" description="Glycyl lysine isopeptide (Lys-Gly) (interchain with G-Cter in ubiquitin)" evidence="2">
    <location>
        <position position="117"/>
    </location>
</feature>
<feature type="cross-link" description="Glycyl lysine isopeptide (Lys-Gly) (interchain with G-Cter in SUMO2); alternate" evidence="2">
    <location>
        <position position="123"/>
    </location>
</feature>
<feature type="cross-link" description="Glycyl lysine isopeptide (Lys-Gly) (interchain with G-Cter in SUMO2)" evidence="2">
    <location>
        <position position="167"/>
    </location>
</feature>
<feature type="cross-link" description="Glycyl lysine isopeptide (Lys-Gly) (interchain with G-Cter in SUMO2)" evidence="2">
    <location>
        <position position="189"/>
    </location>
</feature>
<feature type="cross-link" description="Glycyl lysine isopeptide (Lys-Gly) (interchain with G-Cter in SUMO2)" evidence="2">
    <location>
        <position position="320"/>
    </location>
</feature>
<feature type="splice variant" id="VSP_061613" description="In isoform 2." evidence="9">
    <original>QVVQADIATIDSDAVVHPTNSDFYTGGEV</original>
    <variation>NLIHSEISNLAGFEVEAIINPTNADIDLKDDL</variation>
    <location>
        <begin position="198"/>
        <end position="226"/>
    </location>
</feature>
<dbReference type="EMBL" id="AF058445">
    <property type="protein sequence ID" value="AAC28846.1"/>
    <property type="molecule type" value="mRNA"/>
</dbReference>
<dbReference type="EMBL" id="AF058446">
    <property type="protein sequence ID" value="AAC28847.1"/>
    <property type="molecule type" value="mRNA"/>
</dbReference>
<dbReference type="RefSeq" id="NP_990338.1">
    <molecule id="O93327-1"/>
    <property type="nucleotide sequence ID" value="NM_205007.1"/>
</dbReference>
<dbReference type="SMR" id="O93327"/>
<dbReference type="FunCoup" id="O93327">
    <property type="interactions" value="1727"/>
</dbReference>
<dbReference type="STRING" id="9031.ENSGALP00000049554"/>
<dbReference type="PaxDb" id="9031-ENSGALP00000010267"/>
<dbReference type="Ensembl" id="ENSGALT00010039985.1">
    <molecule id="O93327-2"/>
    <property type="protein sequence ID" value="ENSGALP00010023157.1"/>
    <property type="gene ID" value="ENSGALG00010016581.1"/>
</dbReference>
<dbReference type="Ensembl" id="ENSGALT00010039990.1">
    <molecule id="O93327-1"/>
    <property type="protein sequence ID" value="ENSGALP00010023162.1"/>
    <property type="gene ID" value="ENSGALG00010016581.1"/>
</dbReference>
<dbReference type="GeneID" id="395858"/>
<dbReference type="KEGG" id="gga:395858"/>
<dbReference type="CTD" id="395858"/>
<dbReference type="VEuPathDB" id="HostDB:geneid_395858"/>
<dbReference type="eggNOG" id="KOG1756">
    <property type="taxonomic scope" value="Eukaryota"/>
</dbReference>
<dbReference type="eggNOG" id="KOG2633">
    <property type="taxonomic scope" value="Eukaryota"/>
</dbReference>
<dbReference type="GeneTree" id="ENSGT00940000159541"/>
<dbReference type="HOGENOM" id="CLU_062828_0_0_1"/>
<dbReference type="InParanoid" id="O93327"/>
<dbReference type="OMA" id="GHHFPAK"/>
<dbReference type="OrthoDB" id="9421954at2759"/>
<dbReference type="PhylomeDB" id="O93327"/>
<dbReference type="TreeFam" id="TF332276"/>
<dbReference type="PRO" id="PR:O93327"/>
<dbReference type="Proteomes" id="UP000000539">
    <property type="component" value="Chromosome 13"/>
</dbReference>
<dbReference type="Bgee" id="ENSGALG00000040141">
    <property type="expression patterns" value="Expressed in brain and 13 other cell types or tissues"/>
</dbReference>
<dbReference type="GO" id="GO:0000786">
    <property type="term" value="C:nucleosome"/>
    <property type="evidence" value="ECO:0000318"/>
    <property type="project" value="GO_Central"/>
</dbReference>
<dbReference type="GO" id="GO:0005634">
    <property type="term" value="C:nucleus"/>
    <property type="evidence" value="ECO:0000250"/>
    <property type="project" value="UniProtKB"/>
</dbReference>
<dbReference type="GO" id="GO:0072570">
    <property type="term" value="F:ADP-D-ribose binding"/>
    <property type="evidence" value="ECO:0000250"/>
    <property type="project" value="UniProtKB"/>
</dbReference>
<dbReference type="GO" id="GO:0160002">
    <property type="term" value="F:ADP-D-ribose modification-dependent protein binding"/>
    <property type="evidence" value="ECO:0000250"/>
    <property type="project" value="UniProtKB"/>
</dbReference>
<dbReference type="GO" id="GO:0003677">
    <property type="term" value="F:DNA binding"/>
    <property type="evidence" value="ECO:0007669"/>
    <property type="project" value="UniProtKB-KW"/>
</dbReference>
<dbReference type="GO" id="GO:0046982">
    <property type="term" value="F:protein heterodimerization activity"/>
    <property type="evidence" value="ECO:0007669"/>
    <property type="project" value="InterPro"/>
</dbReference>
<dbReference type="GO" id="GO:0030527">
    <property type="term" value="F:structural constituent of chromatin"/>
    <property type="evidence" value="ECO:0000318"/>
    <property type="project" value="GO_Central"/>
</dbReference>
<dbReference type="GO" id="GO:0031507">
    <property type="term" value="P:heterochromatin formation"/>
    <property type="evidence" value="ECO:0000318"/>
    <property type="project" value="GO_Central"/>
</dbReference>
<dbReference type="GO" id="GO:0000122">
    <property type="term" value="P:negative regulation of transcription by RNA polymerase II"/>
    <property type="evidence" value="ECO:0000318"/>
    <property type="project" value="GO_Central"/>
</dbReference>
<dbReference type="GO" id="GO:1901837">
    <property type="term" value="P:negative regulation of transcription of nucleolar large rRNA by RNA polymerase I"/>
    <property type="evidence" value="ECO:0000318"/>
    <property type="project" value="GO_Central"/>
</dbReference>
<dbReference type="GO" id="GO:0006334">
    <property type="term" value="P:nucleosome assembly"/>
    <property type="evidence" value="ECO:0007669"/>
    <property type="project" value="InterPro"/>
</dbReference>
<dbReference type="GO" id="GO:1902688">
    <property type="term" value="P:regulation of NAD metabolic process"/>
    <property type="evidence" value="ECO:0000250"/>
    <property type="project" value="UniProtKB"/>
</dbReference>
<dbReference type="CDD" id="cd00074">
    <property type="entry name" value="HFD_H2A"/>
    <property type="match status" value="1"/>
</dbReference>
<dbReference type="CDD" id="cd02904">
    <property type="entry name" value="Macro_H2A-like"/>
    <property type="match status" value="1"/>
</dbReference>
<dbReference type="FunFam" id="1.10.20.10:FF:000013">
    <property type="entry name" value="Core histone macro-H2A"/>
    <property type="match status" value="1"/>
</dbReference>
<dbReference type="FunFam" id="3.40.220.10:FF:000002">
    <property type="entry name" value="Core histone macro-H2A"/>
    <property type="match status" value="1"/>
</dbReference>
<dbReference type="Gene3D" id="1.10.20.10">
    <property type="entry name" value="Histone, subunit A"/>
    <property type="match status" value="1"/>
</dbReference>
<dbReference type="Gene3D" id="3.40.220.10">
    <property type="entry name" value="Leucine Aminopeptidase, subunit E, domain 1"/>
    <property type="match status" value="1"/>
</dbReference>
<dbReference type="InterPro" id="IPR021171">
    <property type="entry name" value="Core_histone_macro-H2A"/>
</dbReference>
<dbReference type="InterPro" id="IPR009072">
    <property type="entry name" value="Histone-fold"/>
</dbReference>
<dbReference type="InterPro" id="IPR002119">
    <property type="entry name" value="Histone_H2A"/>
</dbReference>
<dbReference type="InterPro" id="IPR007125">
    <property type="entry name" value="Histone_H2A/H2B/H3"/>
</dbReference>
<dbReference type="InterPro" id="IPR032454">
    <property type="entry name" value="Histone_H2A_C"/>
</dbReference>
<dbReference type="InterPro" id="IPR002589">
    <property type="entry name" value="Macro_dom"/>
</dbReference>
<dbReference type="InterPro" id="IPR043472">
    <property type="entry name" value="Macro_dom-like"/>
</dbReference>
<dbReference type="InterPro" id="IPR035796">
    <property type="entry name" value="Macro_H2A"/>
</dbReference>
<dbReference type="PANTHER" id="PTHR23430">
    <property type="entry name" value="HISTONE H2A"/>
    <property type="match status" value="1"/>
</dbReference>
<dbReference type="Pfam" id="PF00125">
    <property type="entry name" value="Histone"/>
    <property type="match status" value="1"/>
</dbReference>
<dbReference type="Pfam" id="PF16211">
    <property type="entry name" value="Histone_H2A_C"/>
    <property type="match status" value="1"/>
</dbReference>
<dbReference type="Pfam" id="PF01661">
    <property type="entry name" value="Macro"/>
    <property type="match status" value="1"/>
</dbReference>
<dbReference type="PIRSF" id="PIRSF037942">
    <property type="entry name" value="Core_histone_macro-H2A"/>
    <property type="match status" value="1"/>
</dbReference>
<dbReference type="PRINTS" id="PR00620">
    <property type="entry name" value="HISTONEH2A"/>
</dbReference>
<dbReference type="SMART" id="SM00506">
    <property type="entry name" value="A1pp"/>
    <property type="match status" value="1"/>
</dbReference>
<dbReference type="SMART" id="SM00414">
    <property type="entry name" value="H2A"/>
    <property type="match status" value="1"/>
</dbReference>
<dbReference type="SUPFAM" id="SSF47113">
    <property type="entry name" value="Histone-fold"/>
    <property type="match status" value="1"/>
</dbReference>
<dbReference type="SUPFAM" id="SSF52949">
    <property type="entry name" value="Macro domain-like"/>
    <property type="match status" value="1"/>
</dbReference>
<dbReference type="PROSITE" id="PS51154">
    <property type="entry name" value="MACRO"/>
    <property type="match status" value="1"/>
</dbReference>